<feature type="chain" id="PRO_0000103394" description="Error-prone DNA polymerase">
    <location>
        <begin position="1"/>
        <end position="1118"/>
    </location>
</feature>
<feature type="region of interest" description="Disordered" evidence="2">
    <location>
        <begin position="1071"/>
        <end position="1118"/>
    </location>
</feature>
<proteinExistence type="inferred from homology"/>
<evidence type="ECO:0000255" key="1">
    <source>
        <dbReference type="HAMAP-Rule" id="MF_01902"/>
    </source>
</evidence>
<evidence type="ECO:0000256" key="2">
    <source>
        <dbReference type="SAM" id="MobiDB-lite"/>
    </source>
</evidence>
<name>DNAE2_RHILO</name>
<gene>
    <name evidence="1" type="primary">dnaE2</name>
    <name type="ordered locus">mlr4428</name>
</gene>
<sequence>MNALTVIPYAEFGIQSNFSFLRGASKPEELVVAAKLMGFSAIGLADRNTVAGVVRAWQQAKVEKLAYHPGCRLVFGDGTPDILAYPRNRAGWGHLCRMLTQANLRDETEKGATLLQRDDLLEWGDLMSLAVLPDLAAGAEDSLALLGQIKDRFGRALRLGVSPCYAGYDRFRIEQAAALAQVAGIPLMATNDVLYHTAERRPLQDVLTAIRLNTPVAEVGLELSANAERHLKPPLEMARLFRRHPQALAETLRFAEELTFSLSDLQYNYPDEPTESGLGPQAELERLAREGAARRYPSGVPHSVIKRIEEELALIERLNYARYFLTVYDIVKYARSQDILCQGRGSAANSIVCFCIGITEVGPDRIDTLFERFISEERNEPPDIDVDFEHEKRETVIQYIYEKYSSKRTALAAAVISYRGRSALREVSKAMGLSEDVRASLSGSIWGWSTSEVGEKEARAGGLDRSDPTSRHVMERANEIMGFPRHLSQHVGGFVITKDRLDEIVPIVKTAMDERKMVEWDKDDLDAVKILKVDVLALGMLTCLQRAFILLTDHYPKARDPYGQPYVLASLPPEDKRVYDMIGRADTLGVFQIESRAQMSMLPRLKPKDFYDLVIEVAIVRPGPIQGDMVHPYLRRRQGKEKPEYQKPELEAILSKTLGVPLFQEQAMKIAIVAGGFRPGEADELRRAMATFKRTGTIGNYRQRMIDGMVGKGYTKDFAERCFKQIEGFGEYGFPESHAASFALLVYASCWFKTFYPDVFCAAILNSQPMGFYQPAQLVRDARDHGVDIREVDVNCSAWDCTLEKVPFDPARILPRHADMRGVIETNHAVRLGFRQIKGLSKERMEDFAKRRGSGYETVRDVWLRSGLDVDEIERLAQADAFRSIGLDRRAALWEVRALGAKSAAEKLPLFDQPALRLRELEPETKLPKMPLGEHVIHDYRSLGLSLKAHPVAFLRERLDRAGVTPNANLPSQRDGRRVSVAGLVLVRQRPGKGNAIFLTLEDDKAVANVIFWERTFTRFRPIVMGARFVKVSGKLQSESGVIHIVAEKIEDLTPWLTVLLEKVSGAGAPGPQPMGYAKEVGSDRRSRPEIGNAPARQDLATLSEEAEQVMPKGRNFQ</sequence>
<accession>Q98E34</accession>
<organism>
    <name type="scientific">Mesorhizobium japonicum (strain LMG 29417 / CECT 9101 / MAFF 303099)</name>
    <name type="common">Mesorhizobium loti (strain MAFF 303099)</name>
    <dbReference type="NCBI Taxonomy" id="266835"/>
    <lineage>
        <taxon>Bacteria</taxon>
        <taxon>Pseudomonadati</taxon>
        <taxon>Pseudomonadota</taxon>
        <taxon>Alphaproteobacteria</taxon>
        <taxon>Hyphomicrobiales</taxon>
        <taxon>Phyllobacteriaceae</taxon>
        <taxon>Mesorhizobium</taxon>
    </lineage>
</organism>
<dbReference type="EC" id="2.7.7.7" evidence="1"/>
<dbReference type="EMBL" id="BA000012">
    <property type="protein sequence ID" value="BAB51086.1"/>
    <property type="molecule type" value="Genomic_DNA"/>
</dbReference>
<dbReference type="RefSeq" id="WP_010912428.1">
    <property type="nucleotide sequence ID" value="NC_002678.2"/>
</dbReference>
<dbReference type="SMR" id="Q98E34"/>
<dbReference type="KEGG" id="mlo:mlr4428"/>
<dbReference type="PATRIC" id="fig|266835.9.peg.3493"/>
<dbReference type="eggNOG" id="COG0587">
    <property type="taxonomic scope" value="Bacteria"/>
</dbReference>
<dbReference type="HOGENOM" id="CLU_001600_4_0_5"/>
<dbReference type="Proteomes" id="UP000000552">
    <property type="component" value="Chromosome"/>
</dbReference>
<dbReference type="GO" id="GO:0005737">
    <property type="term" value="C:cytoplasm"/>
    <property type="evidence" value="ECO:0007669"/>
    <property type="project" value="UniProtKB-SubCell"/>
</dbReference>
<dbReference type="GO" id="GO:0008408">
    <property type="term" value="F:3'-5' exonuclease activity"/>
    <property type="evidence" value="ECO:0007669"/>
    <property type="project" value="InterPro"/>
</dbReference>
<dbReference type="GO" id="GO:0003887">
    <property type="term" value="F:DNA-directed DNA polymerase activity"/>
    <property type="evidence" value="ECO:0007669"/>
    <property type="project" value="UniProtKB-UniRule"/>
</dbReference>
<dbReference type="GO" id="GO:0003676">
    <property type="term" value="F:nucleic acid binding"/>
    <property type="evidence" value="ECO:0007669"/>
    <property type="project" value="InterPro"/>
</dbReference>
<dbReference type="GO" id="GO:0006281">
    <property type="term" value="P:DNA repair"/>
    <property type="evidence" value="ECO:0007669"/>
    <property type="project" value="UniProtKB-UniRule"/>
</dbReference>
<dbReference type="GO" id="GO:0006260">
    <property type="term" value="P:DNA replication"/>
    <property type="evidence" value="ECO:0007669"/>
    <property type="project" value="UniProtKB-KW"/>
</dbReference>
<dbReference type="CDD" id="cd04485">
    <property type="entry name" value="DnaE_OBF"/>
    <property type="match status" value="1"/>
</dbReference>
<dbReference type="CDD" id="cd07434">
    <property type="entry name" value="PHP_PolIIIA_DnaE2"/>
    <property type="match status" value="1"/>
</dbReference>
<dbReference type="Gene3D" id="3.20.20.140">
    <property type="entry name" value="Metal-dependent hydrolases"/>
    <property type="match status" value="1"/>
</dbReference>
<dbReference type="HAMAP" id="MF_01902">
    <property type="entry name" value="DNApol_error_prone"/>
    <property type="match status" value="1"/>
</dbReference>
<dbReference type="InterPro" id="IPR011708">
    <property type="entry name" value="DNA_pol3_alpha_NTPase_dom"/>
</dbReference>
<dbReference type="InterPro" id="IPR040982">
    <property type="entry name" value="DNA_pol3_finger"/>
</dbReference>
<dbReference type="InterPro" id="IPR023073">
    <property type="entry name" value="DnaE2"/>
</dbReference>
<dbReference type="InterPro" id="IPR004805">
    <property type="entry name" value="DnaE2/DnaE/PolC"/>
</dbReference>
<dbReference type="InterPro" id="IPR029460">
    <property type="entry name" value="DNAPol_HHH"/>
</dbReference>
<dbReference type="InterPro" id="IPR004365">
    <property type="entry name" value="NA-bd_OB_tRNA"/>
</dbReference>
<dbReference type="InterPro" id="IPR004013">
    <property type="entry name" value="PHP_dom"/>
</dbReference>
<dbReference type="InterPro" id="IPR003141">
    <property type="entry name" value="Pol/His_phosphatase_N"/>
</dbReference>
<dbReference type="NCBIfam" id="TIGR00594">
    <property type="entry name" value="polc"/>
    <property type="match status" value="1"/>
</dbReference>
<dbReference type="NCBIfam" id="NF004225">
    <property type="entry name" value="PRK05672.1"/>
    <property type="match status" value="1"/>
</dbReference>
<dbReference type="PANTHER" id="PTHR32294">
    <property type="entry name" value="DNA POLYMERASE III SUBUNIT ALPHA"/>
    <property type="match status" value="1"/>
</dbReference>
<dbReference type="PANTHER" id="PTHR32294:SF4">
    <property type="entry name" value="ERROR-PRONE DNA POLYMERASE"/>
    <property type="match status" value="1"/>
</dbReference>
<dbReference type="Pfam" id="PF07733">
    <property type="entry name" value="DNA_pol3_alpha"/>
    <property type="match status" value="1"/>
</dbReference>
<dbReference type="Pfam" id="PF17657">
    <property type="entry name" value="DNA_pol3_finger"/>
    <property type="match status" value="1"/>
</dbReference>
<dbReference type="Pfam" id="PF14579">
    <property type="entry name" value="HHH_6"/>
    <property type="match status" value="1"/>
</dbReference>
<dbReference type="Pfam" id="PF02811">
    <property type="entry name" value="PHP"/>
    <property type="match status" value="1"/>
</dbReference>
<dbReference type="Pfam" id="PF01336">
    <property type="entry name" value="tRNA_anti-codon"/>
    <property type="match status" value="1"/>
</dbReference>
<dbReference type="SMART" id="SM00481">
    <property type="entry name" value="POLIIIAc"/>
    <property type="match status" value="1"/>
</dbReference>
<protein>
    <recommendedName>
        <fullName evidence="1">Error-prone DNA polymerase</fullName>
        <ecNumber evidence="1">2.7.7.7</ecNumber>
    </recommendedName>
</protein>
<reference key="1">
    <citation type="journal article" date="2000" name="DNA Res.">
        <title>Complete genome structure of the nitrogen-fixing symbiotic bacterium Mesorhizobium loti.</title>
        <authorList>
            <person name="Kaneko T."/>
            <person name="Nakamura Y."/>
            <person name="Sato S."/>
            <person name="Asamizu E."/>
            <person name="Kato T."/>
            <person name="Sasamoto S."/>
            <person name="Watanabe A."/>
            <person name="Idesawa K."/>
            <person name="Ishikawa A."/>
            <person name="Kawashima K."/>
            <person name="Kimura T."/>
            <person name="Kishida Y."/>
            <person name="Kiyokawa C."/>
            <person name="Kohara M."/>
            <person name="Matsumoto M."/>
            <person name="Matsuno A."/>
            <person name="Mochizuki Y."/>
            <person name="Nakayama S."/>
            <person name="Nakazaki N."/>
            <person name="Shimpo S."/>
            <person name="Sugimoto M."/>
            <person name="Takeuchi C."/>
            <person name="Yamada M."/>
            <person name="Tabata S."/>
        </authorList>
    </citation>
    <scope>NUCLEOTIDE SEQUENCE [LARGE SCALE GENOMIC DNA]</scope>
    <source>
        <strain>LMG 29417 / CECT 9101 / MAFF 303099</strain>
    </source>
</reference>
<keyword id="KW-0963">Cytoplasm</keyword>
<keyword id="KW-0227">DNA damage</keyword>
<keyword id="KW-0234">DNA repair</keyword>
<keyword id="KW-0235">DNA replication</keyword>
<keyword id="KW-0239">DNA-directed DNA polymerase</keyword>
<keyword id="KW-0548">Nucleotidyltransferase</keyword>
<keyword id="KW-0808">Transferase</keyword>
<comment type="function">
    <text evidence="1">DNA polymerase involved in damage-induced mutagenesis and translesion synthesis (TLS). It is not the major replicative DNA polymerase.</text>
</comment>
<comment type="catalytic activity">
    <reaction evidence="1">
        <text>DNA(n) + a 2'-deoxyribonucleoside 5'-triphosphate = DNA(n+1) + diphosphate</text>
        <dbReference type="Rhea" id="RHEA:22508"/>
        <dbReference type="Rhea" id="RHEA-COMP:17339"/>
        <dbReference type="Rhea" id="RHEA-COMP:17340"/>
        <dbReference type="ChEBI" id="CHEBI:33019"/>
        <dbReference type="ChEBI" id="CHEBI:61560"/>
        <dbReference type="ChEBI" id="CHEBI:173112"/>
        <dbReference type="EC" id="2.7.7.7"/>
    </reaction>
</comment>
<comment type="subcellular location">
    <subcellularLocation>
        <location evidence="1">Cytoplasm</location>
    </subcellularLocation>
</comment>
<comment type="similarity">
    <text evidence="1">Belongs to the DNA polymerase type-C family. DnaE2 subfamily.</text>
</comment>